<accession>Q9SAD7</accession>
<accession>Q0WMZ1</accession>
<accession>Q9LD20</accession>
<accession>Q9M7E8</accession>
<proteinExistence type="evidence at protein level"/>
<protein>
    <recommendedName>
        <fullName evidence="6">Eukaryotic translation initiation factor 4B2</fullName>
        <shortName evidence="6">AtTif4B2</shortName>
        <shortName evidence="8">eIF4B2</shortName>
    </recommendedName>
    <alternativeName>
        <fullName evidence="7">Protein SPONTANEOUS NECROTIC SPOTS</fullName>
    </alternativeName>
</protein>
<dbReference type="EMBL" id="AF136007">
    <property type="protein sequence ID" value="AAF27287.1"/>
    <property type="molecule type" value="Genomic_DNA"/>
</dbReference>
<dbReference type="EMBL" id="AF145231">
    <property type="protein sequence ID" value="AAF27293.1"/>
    <property type="status" value="ALT_FRAME"/>
    <property type="molecule type" value="mRNA"/>
</dbReference>
<dbReference type="EMBL" id="AC007357">
    <property type="protein sequence ID" value="AAD31055.1"/>
    <property type="molecule type" value="Genomic_DNA"/>
</dbReference>
<dbReference type="EMBL" id="CP002684">
    <property type="protein sequence ID" value="AEE28960.1"/>
    <property type="molecule type" value="Genomic_DNA"/>
</dbReference>
<dbReference type="EMBL" id="AK229665">
    <property type="protein sequence ID" value="BAF01509.1"/>
    <property type="molecule type" value="mRNA"/>
</dbReference>
<dbReference type="PIR" id="B86264">
    <property type="entry name" value="B86264"/>
</dbReference>
<dbReference type="RefSeq" id="NP_172761.1">
    <property type="nucleotide sequence ID" value="NM_101172.3"/>
</dbReference>
<dbReference type="SMR" id="Q9SAD7"/>
<dbReference type="FunCoup" id="Q9SAD7">
    <property type="interactions" value="1472"/>
</dbReference>
<dbReference type="STRING" id="3702.Q9SAD7"/>
<dbReference type="GlyGen" id="Q9SAD7">
    <property type="glycosylation" value="2 sites, 1 O-linked glycan (2 sites)"/>
</dbReference>
<dbReference type="iPTMnet" id="Q9SAD7"/>
<dbReference type="MetOSite" id="Q9SAD7"/>
<dbReference type="PaxDb" id="3702-AT1G13020.1"/>
<dbReference type="ProteomicsDB" id="250677"/>
<dbReference type="EnsemblPlants" id="AT1G13020.1">
    <property type="protein sequence ID" value="AT1G13020.1"/>
    <property type="gene ID" value="AT1G13020"/>
</dbReference>
<dbReference type="GeneID" id="837859"/>
<dbReference type="Gramene" id="AT1G13020.1">
    <property type="protein sequence ID" value="AT1G13020.1"/>
    <property type="gene ID" value="AT1G13020"/>
</dbReference>
<dbReference type="KEGG" id="ath:AT1G13020"/>
<dbReference type="Araport" id="AT1G13020"/>
<dbReference type="TAIR" id="AT1G13020">
    <property type="gene designation" value="EIF4B2"/>
</dbReference>
<dbReference type="eggNOG" id="ENOG502QVPR">
    <property type="taxonomic scope" value="Eukaryota"/>
</dbReference>
<dbReference type="HOGENOM" id="CLU_028368_1_0_1"/>
<dbReference type="InParanoid" id="Q9SAD7"/>
<dbReference type="OMA" id="WAMTKKP"/>
<dbReference type="PhylomeDB" id="Q9SAD7"/>
<dbReference type="PRO" id="PR:Q9SAD7"/>
<dbReference type="Proteomes" id="UP000006548">
    <property type="component" value="Chromosome 1"/>
</dbReference>
<dbReference type="ExpressionAtlas" id="Q9SAD7">
    <property type="expression patterns" value="baseline and differential"/>
</dbReference>
<dbReference type="GO" id="GO:0005576">
    <property type="term" value="C:extracellular region"/>
    <property type="evidence" value="ECO:0007005"/>
    <property type="project" value="TAIR"/>
</dbReference>
<dbReference type="GO" id="GO:0005634">
    <property type="term" value="C:nucleus"/>
    <property type="evidence" value="ECO:0007669"/>
    <property type="project" value="UniProtKB-SubCell"/>
</dbReference>
<dbReference type="GO" id="GO:0003729">
    <property type="term" value="F:mRNA binding"/>
    <property type="evidence" value="ECO:0000314"/>
    <property type="project" value="TAIR"/>
</dbReference>
<dbReference type="GO" id="GO:0042803">
    <property type="term" value="F:protein homodimerization activity"/>
    <property type="evidence" value="ECO:0000250"/>
    <property type="project" value="UniProtKB"/>
</dbReference>
<dbReference type="GO" id="GO:0003743">
    <property type="term" value="F:translation initiation factor activity"/>
    <property type="evidence" value="ECO:0000314"/>
    <property type="project" value="TAIR"/>
</dbReference>
<dbReference type="InterPro" id="IPR010433">
    <property type="entry name" value="EIF-4B_pln"/>
</dbReference>
<dbReference type="PANTHER" id="PTHR32091">
    <property type="entry name" value="EUKARYOTIC TRANSLATION INITIATION FACTOR 4B"/>
    <property type="match status" value="1"/>
</dbReference>
<dbReference type="PANTHER" id="PTHR32091:SF28">
    <property type="entry name" value="EUKARYOTIC TRANSLATION INITIATION FACTOR 4B2"/>
    <property type="match status" value="1"/>
</dbReference>
<dbReference type="Pfam" id="PF06273">
    <property type="entry name" value="eIF-4B"/>
    <property type="match status" value="1"/>
</dbReference>
<gene>
    <name evidence="6" type="primary">EIF4B2</name>
    <name evidence="7" type="synonym">SNS</name>
    <name evidence="10" type="ordered locus">At1g13020</name>
    <name evidence="9" type="ORF">F3F19.4</name>
</gene>
<comment type="function">
    <text evidence="4">Promotes the eIF4F and eIF4A RNA-dependent ATP-hydrolysis activity with different efficiency depending on mRNAs, thus providing mRNA discrimination during initiation of translation.</text>
</comment>
<comment type="subunit">
    <text evidence="1 4">Homodimer (By similarity). Nonspherical monomer. mRNA-discriminating component of initiation complexes (PubMed:19493973).</text>
</comment>
<comment type="subcellular location">
    <subcellularLocation>
        <location evidence="2">Nucleus</location>
    </subcellularLocation>
</comment>
<comment type="PTM">
    <text evidence="1">Phosphorylated.</text>
</comment>
<comment type="miscellaneous">
    <text evidence="5">Over-expression in sns-D leads to programmed cell death (PCD) in the leaves characterized by spontaneous necrotic spots on the rosette leaves under aseptic conditions. Embryo lethal when homozygote.</text>
</comment>
<comment type="similarity">
    <text evidence="8">Belongs to the eIF-4 subunit B family.</text>
</comment>
<comment type="sequence caution" evidence="8">
    <conflict type="frameshift">
        <sequence resource="EMBL-CDS" id="AAF27293"/>
    </conflict>
</comment>
<keyword id="KW-0396">Initiation factor</keyword>
<keyword id="KW-0539">Nucleus</keyword>
<keyword id="KW-0597">Phosphoprotein</keyword>
<keyword id="KW-0648">Protein biosynthesis</keyword>
<keyword id="KW-1185">Reference proteome</keyword>
<organism evidence="11">
    <name type="scientific">Arabidopsis thaliana</name>
    <name type="common">Mouse-ear cress</name>
    <dbReference type="NCBI Taxonomy" id="3702"/>
    <lineage>
        <taxon>Eukaryota</taxon>
        <taxon>Viridiplantae</taxon>
        <taxon>Streptophyta</taxon>
        <taxon>Embryophyta</taxon>
        <taxon>Tracheophyta</taxon>
        <taxon>Spermatophyta</taxon>
        <taxon>Magnoliopsida</taxon>
        <taxon>eudicotyledons</taxon>
        <taxon>Gunneridae</taxon>
        <taxon>Pentapetalae</taxon>
        <taxon>rosids</taxon>
        <taxon>malvids</taxon>
        <taxon>Brassicales</taxon>
        <taxon>Brassicaceae</taxon>
        <taxon>Camelineae</taxon>
        <taxon>Arabidopsis</taxon>
    </lineage>
</organism>
<reference key="1">
    <citation type="journal article" date="1999" name="Biochem. Biophys. Res. Commun.">
        <title>Eukaryotic initiation factor 4B from wheat and Arabidopsis thaliana is a member of a multigene family.</title>
        <authorList>
            <person name="Metz A.M."/>
            <person name="Wong K.C."/>
            <person name="Malmstrom S.A."/>
            <person name="Browning K.S."/>
        </authorList>
    </citation>
    <scope>NUCLEOTIDE SEQUENCE [GENOMIC DNA / MRNA]</scope>
    <scope>GENE FAMILY</scope>
    <scope>NOMENCLATURE</scope>
    <source>
        <strain>cv. Columbia</strain>
        <strain>cv. Landsberg erecta</strain>
    </source>
</reference>
<reference key="2">
    <citation type="journal article" date="2000" name="Nature">
        <title>Sequence and analysis of chromosome 1 of the plant Arabidopsis thaliana.</title>
        <authorList>
            <person name="Theologis A."/>
            <person name="Ecker J.R."/>
            <person name="Palm C.J."/>
            <person name="Federspiel N.A."/>
            <person name="Kaul S."/>
            <person name="White O."/>
            <person name="Alonso J."/>
            <person name="Altafi H."/>
            <person name="Araujo R."/>
            <person name="Bowman C.L."/>
            <person name="Brooks S.Y."/>
            <person name="Buehler E."/>
            <person name="Chan A."/>
            <person name="Chao Q."/>
            <person name="Chen H."/>
            <person name="Cheuk R.F."/>
            <person name="Chin C.W."/>
            <person name="Chung M.K."/>
            <person name="Conn L."/>
            <person name="Conway A.B."/>
            <person name="Conway A.R."/>
            <person name="Creasy T.H."/>
            <person name="Dewar K."/>
            <person name="Dunn P."/>
            <person name="Etgu P."/>
            <person name="Feldblyum T.V."/>
            <person name="Feng J.-D."/>
            <person name="Fong B."/>
            <person name="Fujii C.Y."/>
            <person name="Gill J.E."/>
            <person name="Goldsmith A.D."/>
            <person name="Haas B."/>
            <person name="Hansen N.F."/>
            <person name="Hughes B."/>
            <person name="Huizar L."/>
            <person name="Hunter J.L."/>
            <person name="Jenkins J."/>
            <person name="Johnson-Hopson C."/>
            <person name="Khan S."/>
            <person name="Khaykin E."/>
            <person name="Kim C.J."/>
            <person name="Koo H.L."/>
            <person name="Kremenetskaia I."/>
            <person name="Kurtz D.B."/>
            <person name="Kwan A."/>
            <person name="Lam B."/>
            <person name="Langin-Hooper S."/>
            <person name="Lee A."/>
            <person name="Lee J.M."/>
            <person name="Lenz C.A."/>
            <person name="Li J.H."/>
            <person name="Li Y.-P."/>
            <person name="Lin X."/>
            <person name="Liu S.X."/>
            <person name="Liu Z.A."/>
            <person name="Luros J.S."/>
            <person name="Maiti R."/>
            <person name="Marziali A."/>
            <person name="Militscher J."/>
            <person name="Miranda M."/>
            <person name="Nguyen M."/>
            <person name="Nierman W.C."/>
            <person name="Osborne B.I."/>
            <person name="Pai G."/>
            <person name="Peterson J."/>
            <person name="Pham P.K."/>
            <person name="Rizzo M."/>
            <person name="Rooney T."/>
            <person name="Rowley D."/>
            <person name="Sakano H."/>
            <person name="Salzberg S.L."/>
            <person name="Schwartz J.R."/>
            <person name="Shinn P."/>
            <person name="Southwick A.M."/>
            <person name="Sun H."/>
            <person name="Tallon L.J."/>
            <person name="Tambunga G."/>
            <person name="Toriumi M.J."/>
            <person name="Town C.D."/>
            <person name="Utterback T."/>
            <person name="Van Aken S."/>
            <person name="Vaysberg M."/>
            <person name="Vysotskaia V.S."/>
            <person name="Walker M."/>
            <person name="Wu D."/>
            <person name="Yu G."/>
            <person name="Fraser C.M."/>
            <person name="Venter J.C."/>
            <person name="Davis R.W."/>
        </authorList>
    </citation>
    <scope>NUCLEOTIDE SEQUENCE [LARGE SCALE GENOMIC DNA]</scope>
    <source>
        <strain>cv. Columbia</strain>
    </source>
</reference>
<reference key="3">
    <citation type="journal article" date="2017" name="Plant J.">
        <title>Araport11: a complete reannotation of the Arabidopsis thaliana reference genome.</title>
        <authorList>
            <person name="Cheng C.Y."/>
            <person name="Krishnakumar V."/>
            <person name="Chan A.P."/>
            <person name="Thibaud-Nissen F."/>
            <person name="Schobel S."/>
            <person name="Town C.D."/>
        </authorList>
    </citation>
    <scope>GENOME REANNOTATION</scope>
    <source>
        <strain>cv. Columbia</strain>
    </source>
</reference>
<reference key="4">
    <citation type="submission" date="2006-07" db="EMBL/GenBank/DDBJ databases">
        <title>Large-scale analysis of RIKEN Arabidopsis full-length (RAFL) cDNAs.</title>
        <authorList>
            <person name="Totoki Y."/>
            <person name="Seki M."/>
            <person name="Ishida J."/>
            <person name="Nakajima M."/>
            <person name="Enju A."/>
            <person name="Kamiya A."/>
            <person name="Narusaka M."/>
            <person name="Shin-i T."/>
            <person name="Nakagawa M."/>
            <person name="Sakamoto N."/>
            <person name="Oishi K."/>
            <person name="Kohara Y."/>
            <person name="Kobayashi M."/>
            <person name="Toyoda A."/>
            <person name="Sakaki Y."/>
            <person name="Sakurai T."/>
            <person name="Iida K."/>
            <person name="Akiyama K."/>
            <person name="Satou M."/>
            <person name="Toyoda T."/>
            <person name="Konagaya A."/>
            <person name="Carninci P."/>
            <person name="Kawai J."/>
            <person name="Hayashizaki Y."/>
            <person name="Shinozaki K."/>
        </authorList>
    </citation>
    <scope>NUCLEOTIDE SEQUENCE [LARGE SCALE MRNA]</scope>
    <source>
        <strain>cv. Columbia</strain>
    </source>
</reference>
<reference key="5">
    <citation type="journal article" date="2009" name="Plant Physiol.">
        <title>Evidence for variation in the optimal translation initiation complex: plant eIF4B, eIF4F, and eIF(iso)4F differentially promote translation of mRNAs.</title>
        <authorList>
            <person name="Mayberry L.K."/>
            <person name="Allen M.L."/>
            <person name="Dennis M.D."/>
            <person name="Browning K.S."/>
        </authorList>
    </citation>
    <scope>FUNCTION</scope>
    <scope>SUBUNIT</scope>
</reference>
<reference key="6">
    <citation type="journal article" date="2009" name="Plant Physiol.">
        <title>Large-scale Arabidopsis phosphoproteome profiling reveals novel chloroplast kinase substrates and phosphorylation networks.</title>
        <authorList>
            <person name="Reiland S."/>
            <person name="Messerli G."/>
            <person name="Baerenfaller K."/>
            <person name="Gerrits B."/>
            <person name="Endler A."/>
            <person name="Grossmann J."/>
            <person name="Gruissem W."/>
            <person name="Baginsky S."/>
        </authorList>
    </citation>
    <scope>IDENTIFICATION BY MASS SPECTROMETRY [LARGE SCALE ANALYSIS]</scope>
</reference>
<reference key="7">
    <citation type="journal article" date="2011" name="Front. Plant Sci.">
        <title>Programmed cell death in the leaves of the Arabidopsis spontaneous necrotic spots (sns-D) mutant correlates with increased expression of the eukaryotic translation initiation factor eIF4B2.</title>
        <authorList>
            <person name="Gaussand G.M.D.J.-M."/>
            <person name="Jia Q."/>
            <person name="van der Graaff E."/>
            <person name="Lamers G.E.M."/>
            <person name="Fransz P.F."/>
            <person name="Hooykaas P.J.J."/>
            <person name="de Pater S."/>
        </authorList>
    </citation>
    <scope>MISCELLANEOUS ON PCD</scope>
    <source>
        <strain>cv. C24</strain>
    </source>
</reference>
<evidence type="ECO:0000250" key="1">
    <source>
        <dbReference type="UniProtKB" id="Q9AUJ7"/>
    </source>
</evidence>
<evidence type="ECO:0000255" key="2">
    <source>
        <dbReference type="PROSITE-ProRule" id="PRU00768"/>
    </source>
</evidence>
<evidence type="ECO:0000256" key="3">
    <source>
        <dbReference type="SAM" id="MobiDB-lite"/>
    </source>
</evidence>
<evidence type="ECO:0000269" key="4">
    <source>
    </source>
</evidence>
<evidence type="ECO:0000269" key="5">
    <source>
    </source>
</evidence>
<evidence type="ECO:0000303" key="6">
    <source>
    </source>
</evidence>
<evidence type="ECO:0000303" key="7">
    <source>
    </source>
</evidence>
<evidence type="ECO:0000305" key="8"/>
<evidence type="ECO:0000312" key="9">
    <source>
        <dbReference type="EMBL" id="AAD31055.1"/>
    </source>
</evidence>
<evidence type="ECO:0000312" key="10">
    <source>
        <dbReference type="EMBL" id="AEE28960.1"/>
    </source>
</evidence>
<evidence type="ECO:0000312" key="11">
    <source>
        <dbReference type="Proteomes" id="UP000006548"/>
    </source>
</evidence>
<name>IF4B2_ARATH</name>
<sequence>MSKPWGGIGAWADEAERADEEQAAEATATAADSQSFPSLKEAATAKSSKKKKKMTLSEFTKGAYTAPSSAGLTREQMLQLPTGPRQRSEDEMQPGRLGGGFSSYGGGRSSGPPGRMSRDREDSDGSWGGGGGGRRSYGGFDDDQRGSNSRVSDFPQVSRADEDDDWGKGKKSLPSFDQGRQGSRYGGGGGSFGGGGGGGAGSYGGGGAGAGSGGGGGFSKADEVDNWAAGKAKSSTFGSGFRESGPEPDRWARGVLPSGGGVQEERRRLVFEPRKADTEVSETPTAVKTSKPSPFGAARPREQVLAEKGLDWKKLDSDIEAKKGQTSRPSSAQSSRPSSAQSNRSESSALNNVENVVKPRPKVNPFGDAKPREVLLEEQGKDWRKIDSELEHRRVDRPETEGERMLKEEIEELRKKLEKEAAIAPESKESQQESDSNHQNLPDLIREKEKNLDLLIRELDDKVRFRPRAVERPGSSASRGGSYSERPHSRAGSIDESRSVESMERPRSHGTGDNWPRPVDDRRNFQGSKERGFFNNRNFDRSSSAREGW</sequence>
<feature type="chain" id="PRO_0000434275" description="Eukaryotic translation initiation factor 4B2">
    <location>
        <begin position="1"/>
        <end position="549"/>
    </location>
</feature>
<feature type="region of interest" description="Disordered" evidence="3">
    <location>
        <begin position="1"/>
        <end position="446"/>
    </location>
</feature>
<feature type="region of interest" description="Disordered" evidence="3">
    <location>
        <begin position="465"/>
        <end position="549"/>
    </location>
</feature>
<feature type="short sequence motif" description="Nuclear localization signal 1" evidence="2">
    <location>
        <begin position="169"/>
        <end position="176"/>
    </location>
</feature>
<feature type="short sequence motif" description="Nuclear localization signal 2" evidence="2">
    <location>
        <begin position="234"/>
        <end position="241"/>
    </location>
</feature>
<feature type="compositionally biased region" description="Low complexity" evidence="3">
    <location>
        <begin position="24"/>
        <end position="46"/>
    </location>
</feature>
<feature type="compositionally biased region" description="Gly residues" evidence="3">
    <location>
        <begin position="96"/>
        <end position="109"/>
    </location>
</feature>
<feature type="compositionally biased region" description="Gly residues" evidence="3">
    <location>
        <begin position="126"/>
        <end position="136"/>
    </location>
</feature>
<feature type="compositionally biased region" description="Gly residues" evidence="3">
    <location>
        <begin position="184"/>
        <end position="218"/>
    </location>
</feature>
<feature type="compositionally biased region" description="Basic and acidic residues" evidence="3">
    <location>
        <begin position="263"/>
        <end position="278"/>
    </location>
</feature>
<feature type="compositionally biased region" description="Polar residues" evidence="3">
    <location>
        <begin position="281"/>
        <end position="292"/>
    </location>
</feature>
<feature type="compositionally biased region" description="Basic and acidic residues" evidence="3">
    <location>
        <begin position="299"/>
        <end position="323"/>
    </location>
</feature>
<feature type="compositionally biased region" description="Low complexity" evidence="3">
    <location>
        <begin position="327"/>
        <end position="349"/>
    </location>
</feature>
<feature type="compositionally biased region" description="Basic and acidic residues" evidence="3">
    <location>
        <begin position="369"/>
        <end position="431"/>
    </location>
</feature>
<feature type="compositionally biased region" description="Basic and acidic residues" evidence="3">
    <location>
        <begin position="485"/>
        <end position="507"/>
    </location>
</feature>
<feature type="compositionally biased region" description="Basic and acidic residues" evidence="3">
    <location>
        <begin position="518"/>
        <end position="549"/>
    </location>
</feature>
<feature type="sequence conflict" description="In Ref. 1; AAF27287." evidence="8" ref="1">
    <original>S</original>
    <variation>G</variation>
    <location>
        <position position="68"/>
    </location>
</feature>
<feature type="sequence conflict" description="In Ref. 4; BAF01509." evidence="8" ref="4">
    <original>D</original>
    <variation>G</variation>
    <location>
        <position position="461"/>
    </location>
</feature>